<evidence type="ECO:0000255" key="1">
    <source>
        <dbReference type="HAMAP-Rule" id="MF_00102"/>
    </source>
</evidence>
<evidence type="ECO:0000305" key="2"/>
<dbReference type="EC" id="1.17.1.8" evidence="1"/>
<dbReference type="EMBL" id="CP000102">
    <property type="protein sequence ID" value="ABC56528.1"/>
    <property type="molecule type" value="Genomic_DNA"/>
</dbReference>
<dbReference type="RefSeq" id="WP_011405727.1">
    <property type="nucleotide sequence ID" value="NC_007681.1"/>
</dbReference>
<dbReference type="SMR" id="Q2NHW0"/>
<dbReference type="STRING" id="339860.Msp_0109"/>
<dbReference type="GeneID" id="41324681"/>
<dbReference type="KEGG" id="mst:Msp_0109"/>
<dbReference type="eggNOG" id="arCOG04393">
    <property type="taxonomic scope" value="Archaea"/>
</dbReference>
<dbReference type="HOGENOM" id="CLU_047479_2_1_2"/>
<dbReference type="OrthoDB" id="195035at2157"/>
<dbReference type="UniPathway" id="UPA00034">
    <property type="reaction ID" value="UER00018"/>
</dbReference>
<dbReference type="Proteomes" id="UP000001931">
    <property type="component" value="Chromosome"/>
</dbReference>
<dbReference type="GO" id="GO:0005737">
    <property type="term" value="C:cytoplasm"/>
    <property type="evidence" value="ECO:0007669"/>
    <property type="project" value="UniProtKB-SubCell"/>
</dbReference>
<dbReference type="GO" id="GO:0008839">
    <property type="term" value="F:4-hydroxy-tetrahydrodipicolinate reductase"/>
    <property type="evidence" value="ECO:0007669"/>
    <property type="project" value="UniProtKB-EC"/>
</dbReference>
<dbReference type="GO" id="GO:0051287">
    <property type="term" value="F:NAD binding"/>
    <property type="evidence" value="ECO:0007669"/>
    <property type="project" value="UniProtKB-UniRule"/>
</dbReference>
<dbReference type="GO" id="GO:0050661">
    <property type="term" value="F:NADP binding"/>
    <property type="evidence" value="ECO:0007669"/>
    <property type="project" value="UniProtKB-UniRule"/>
</dbReference>
<dbReference type="GO" id="GO:0016726">
    <property type="term" value="F:oxidoreductase activity, acting on CH or CH2 groups, NAD or NADP as acceptor"/>
    <property type="evidence" value="ECO:0007669"/>
    <property type="project" value="UniProtKB-UniRule"/>
</dbReference>
<dbReference type="GO" id="GO:0019877">
    <property type="term" value="P:diaminopimelate biosynthetic process"/>
    <property type="evidence" value="ECO:0007669"/>
    <property type="project" value="UniProtKB-UniRule"/>
</dbReference>
<dbReference type="GO" id="GO:0009089">
    <property type="term" value="P:lysine biosynthetic process via diaminopimelate"/>
    <property type="evidence" value="ECO:0007669"/>
    <property type="project" value="UniProtKB-UniRule"/>
</dbReference>
<dbReference type="CDD" id="cd02274">
    <property type="entry name" value="DHDPR_N"/>
    <property type="match status" value="1"/>
</dbReference>
<dbReference type="FunFam" id="3.30.360.10:FF:000004">
    <property type="entry name" value="4-hydroxy-tetrahydrodipicolinate reductase"/>
    <property type="match status" value="1"/>
</dbReference>
<dbReference type="Gene3D" id="3.30.360.10">
    <property type="entry name" value="Dihydrodipicolinate Reductase, domain 2"/>
    <property type="match status" value="1"/>
</dbReference>
<dbReference type="Gene3D" id="3.40.50.720">
    <property type="entry name" value="NAD(P)-binding Rossmann-like Domain"/>
    <property type="match status" value="1"/>
</dbReference>
<dbReference type="HAMAP" id="MF_00102">
    <property type="entry name" value="DapB"/>
    <property type="match status" value="1"/>
</dbReference>
<dbReference type="InterPro" id="IPR022663">
    <property type="entry name" value="DapB_C"/>
</dbReference>
<dbReference type="InterPro" id="IPR000846">
    <property type="entry name" value="DapB_N"/>
</dbReference>
<dbReference type="InterPro" id="IPR022664">
    <property type="entry name" value="DapB_N_CS"/>
</dbReference>
<dbReference type="InterPro" id="IPR023940">
    <property type="entry name" value="DHDPR_bac"/>
</dbReference>
<dbReference type="InterPro" id="IPR036291">
    <property type="entry name" value="NAD(P)-bd_dom_sf"/>
</dbReference>
<dbReference type="NCBIfam" id="TIGR00036">
    <property type="entry name" value="dapB"/>
    <property type="match status" value="1"/>
</dbReference>
<dbReference type="PANTHER" id="PTHR20836:SF0">
    <property type="entry name" value="4-HYDROXY-TETRAHYDRODIPICOLINATE REDUCTASE 1, CHLOROPLASTIC-RELATED"/>
    <property type="match status" value="1"/>
</dbReference>
<dbReference type="PANTHER" id="PTHR20836">
    <property type="entry name" value="DIHYDRODIPICOLINATE REDUCTASE"/>
    <property type="match status" value="1"/>
</dbReference>
<dbReference type="Pfam" id="PF05173">
    <property type="entry name" value="DapB_C"/>
    <property type="match status" value="1"/>
</dbReference>
<dbReference type="Pfam" id="PF01113">
    <property type="entry name" value="DapB_N"/>
    <property type="match status" value="1"/>
</dbReference>
<dbReference type="PIRSF" id="PIRSF000161">
    <property type="entry name" value="DHPR"/>
    <property type="match status" value="1"/>
</dbReference>
<dbReference type="SUPFAM" id="SSF55347">
    <property type="entry name" value="Glyceraldehyde-3-phosphate dehydrogenase-like, C-terminal domain"/>
    <property type="match status" value="1"/>
</dbReference>
<dbReference type="SUPFAM" id="SSF51735">
    <property type="entry name" value="NAD(P)-binding Rossmann-fold domains"/>
    <property type="match status" value="1"/>
</dbReference>
<dbReference type="PROSITE" id="PS01298">
    <property type="entry name" value="DAPB"/>
    <property type="match status" value="1"/>
</dbReference>
<reference key="1">
    <citation type="journal article" date="2006" name="J. Bacteriol.">
        <title>The genome sequence of Methanosphaera stadtmanae reveals why this human intestinal archaeon is restricted to methanol and H2 for methane formation and ATP synthesis.</title>
        <authorList>
            <person name="Fricke W.F."/>
            <person name="Seedorf H."/>
            <person name="Henne A."/>
            <person name="Kruer M."/>
            <person name="Liesegang H."/>
            <person name="Hedderich R."/>
            <person name="Gottschalk G."/>
            <person name="Thauer R.K."/>
        </authorList>
    </citation>
    <scope>NUCLEOTIDE SEQUENCE [LARGE SCALE GENOMIC DNA]</scope>
    <source>
        <strain>ATCC 43021 / DSM 3091 / JCM 11832 / MCB-3</strain>
    </source>
</reference>
<organism>
    <name type="scientific">Methanosphaera stadtmanae (strain ATCC 43021 / DSM 3091 / JCM 11832 / MCB-3)</name>
    <dbReference type="NCBI Taxonomy" id="339860"/>
    <lineage>
        <taxon>Archaea</taxon>
        <taxon>Methanobacteriati</taxon>
        <taxon>Methanobacteriota</taxon>
        <taxon>Methanomada group</taxon>
        <taxon>Methanobacteria</taxon>
        <taxon>Methanobacteriales</taxon>
        <taxon>Methanobacteriaceae</taxon>
        <taxon>Methanosphaera</taxon>
    </lineage>
</organism>
<accession>Q2NHW0</accession>
<gene>
    <name evidence="1" type="primary">dapB</name>
    <name type="ordered locus">Msp_0109</name>
</gene>
<comment type="function">
    <text evidence="1">Catalyzes the conversion of 4-hydroxy-tetrahydrodipicolinate (HTPA) to tetrahydrodipicolinate.</text>
</comment>
<comment type="catalytic activity">
    <reaction evidence="1">
        <text>(S)-2,3,4,5-tetrahydrodipicolinate + NAD(+) + H2O = (2S,4S)-4-hydroxy-2,3,4,5-tetrahydrodipicolinate + NADH + H(+)</text>
        <dbReference type="Rhea" id="RHEA:35323"/>
        <dbReference type="ChEBI" id="CHEBI:15377"/>
        <dbReference type="ChEBI" id="CHEBI:15378"/>
        <dbReference type="ChEBI" id="CHEBI:16845"/>
        <dbReference type="ChEBI" id="CHEBI:57540"/>
        <dbReference type="ChEBI" id="CHEBI:57945"/>
        <dbReference type="ChEBI" id="CHEBI:67139"/>
        <dbReference type="EC" id="1.17.1.8"/>
    </reaction>
</comment>
<comment type="catalytic activity">
    <reaction evidence="1">
        <text>(S)-2,3,4,5-tetrahydrodipicolinate + NADP(+) + H2O = (2S,4S)-4-hydroxy-2,3,4,5-tetrahydrodipicolinate + NADPH + H(+)</text>
        <dbReference type="Rhea" id="RHEA:35331"/>
        <dbReference type="ChEBI" id="CHEBI:15377"/>
        <dbReference type="ChEBI" id="CHEBI:15378"/>
        <dbReference type="ChEBI" id="CHEBI:16845"/>
        <dbReference type="ChEBI" id="CHEBI:57783"/>
        <dbReference type="ChEBI" id="CHEBI:58349"/>
        <dbReference type="ChEBI" id="CHEBI:67139"/>
        <dbReference type="EC" id="1.17.1.8"/>
    </reaction>
</comment>
<comment type="pathway">
    <text evidence="1">Amino-acid biosynthesis; L-lysine biosynthesis via DAP pathway; (S)-tetrahydrodipicolinate from L-aspartate: step 4/4.</text>
</comment>
<comment type="subcellular location">
    <subcellularLocation>
        <location evidence="1">Cytoplasm</location>
    </subcellularLocation>
</comment>
<comment type="similarity">
    <text evidence="1">Belongs to the DapB family.</text>
</comment>
<comment type="caution">
    <text evidence="2">Was originally thought to be a dihydrodipicolinate reductase (DHDPR), catalyzing the conversion of dihydrodipicolinate to tetrahydrodipicolinate. However, it was shown in E.coli that the substrate of the enzymatic reaction is not dihydrodipicolinate (DHDP) but in fact (2S,4S)-4-hydroxy-2,3,4,5-tetrahydrodipicolinic acid (HTPA), the product released by the DapA-catalyzed reaction.</text>
</comment>
<name>DAPB_METST</name>
<keyword id="KW-0028">Amino-acid biosynthesis</keyword>
<keyword id="KW-0963">Cytoplasm</keyword>
<keyword id="KW-0220">Diaminopimelate biosynthesis</keyword>
<keyword id="KW-0457">Lysine biosynthesis</keyword>
<keyword id="KW-0520">NAD</keyword>
<keyword id="KW-0521">NADP</keyword>
<keyword id="KW-0560">Oxidoreductase</keyword>
<keyword id="KW-1185">Reference proteome</keyword>
<sequence>MIRVAVTGCAGNMGSKIIKTVQAQDNMEVVMGIEMPNSPLAGNDLGQQIGLGPMGVEIIGSQDLKTELEKVKPDVLVDFTIAKAAVETVKICAECGVNVVVGTTGLNDEQLDVMHKAIKDNDIKAVISPNMATGVNVFFEIVGQVAKILGNEYDVEIVEAHHHNKQDAPSGTAKRAAEIVAENLNLDLKEKACYGREGMVGKRPENEIGIHAVRGGDIVGDHTVMFCGDGERIEVIHRASTRQAFVNGVIRAINYQSSKQDKNIADMFDVLGL</sequence>
<proteinExistence type="inferred from homology"/>
<protein>
    <recommendedName>
        <fullName evidence="1">4-hydroxy-tetrahydrodipicolinate reductase</fullName>
        <shortName evidence="1">HTPA reductase</shortName>
        <ecNumber evidence="1">1.17.1.8</ecNumber>
    </recommendedName>
</protein>
<feature type="chain" id="PRO_1000008593" description="4-hydroxy-tetrahydrodipicolinate reductase">
    <location>
        <begin position="1"/>
        <end position="273"/>
    </location>
</feature>
<feature type="active site" description="Proton donor/acceptor" evidence="1">
    <location>
        <position position="161"/>
    </location>
</feature>
<feature type="active site" description="Proton donor" evidence="1">
    <location>
        <position position="165"/>
    </location>
</feature>
<feature type="binding site" evidence="1">
    <location>
        <begin position="8"/>
        <end position="13"/>
    </location>
    <ligand>
        <name>NAD(+)</name>
        <dbReference type="ChEBI" id="CHEBI:57540"/>
    </ligand>
</feature>
<feature type="binding site" evidence="1">
    <location>
        <position position="34"/>
    </location>
    <ligand>
        <name>NAD(+)</name>
        <dbReference type="ChEBI" id="CHEBI:57540"/>
    </ligand>
</feature>
<feature type="binding site" evidence="1">
    <location>
        <begin position="102"/>
        <end position="104"/>
    </location>
    <ligand>
        <name>NAD(+)</name>
        <dbReference type="ChEBI" id="CHEBI:57540"/>
    </ligand>
</feature>
<feature type="binding site" evidence="1">
    <location>
        <begin position="128"/>
        <end position="131"/>
    </location>
    <ligand>
        <name>NAD(+)</name>
        <dbReference type="ChEBI" id="CHEBI:57540"/>
    </ligand>
</feature>
<feature type="binding site" evidence="1">
    <location>
        <position position="162"/>
    </location>
    <ligand>
        <name>(S)-2,3,4,5-tetrahydrodipicolinate</name>
        <dbReference type="ChEBI" id="CHEBI:16845"/>
    </ligand>
</feature>
<feature type="binding site" evidence="1">
    <location>
        <begin position="171"/>
        <end position="172"/>
    </location>
    <ligand>
        <name>(S)-2,3,4,5-tetrahydrodipicolinate</name>
        <dbReference type="ChEBI" id="CHEBI:16845"/>
    </ligand>
</feature>